<dbReference type="EC" id="3.4.25.2" evidence="1"/>
<dbReference type="EMBL" id="AJ938182">
    <property type="protein sequence ID" value="CAI80804.1"/>
    <property type="molecule type" value="Genomic_DNA"/>
</dbReference>
<dbReference type="RefSeq" id="WP_000072680.1">
    <property type="nucleotide sequence ID" value="NC_007622.1"/>
</dbReference>
<dbReference type="SMR" id="Q2YXL5"/>
<dbReference type="MEROPS" id="T01.007"/>
<dbReference type="KEGG" id="sab:SAB1115"/>
<dbReference type="HOGENOM" id="CLU_093872_1_1_9"/>
<dbReference type="GO" id="GO:0009376">
    <property type="term" value="C:HslUV protease complex"/>
    <property type="evidence" value="ECO:0007669"/>
    <property type="project" value="UniProtKB-UniRule"/>
</dbReference>
<dbReference type="GO" id="GO:0005839">
    <property type="term" value="C:proteasome core complex"/>
    <property type="evidence" value="ECO:0007669"/>
    <property type="project" value="InterPro"/>
</dbReference>
<dbReference type="GO" id="GO:0046872">
    <property type="term" value="F:metal ion binding"/>
    <property type="evidence" value="ECO:0007669"/>
    <property type="project" value="UniProtKB-KW"/>
</dbReference>
<dbReference type="GO" id="GO:0004298">
    <property type="term" value="F:threonine-type endopeptidase activity"/>
    <property type="evidence" value="ECO:0007669"/>
    <property type="project" value="UniProtKB-KW"/>
</dbReference>
<dbReference type="GO" id="GO:0051603">
    <property type="term" value="P:proteolysis involved in protein catabolic process"/>
    <property type="evidence" value="ECO:0007669"/>
    <property type="project" value="InterPro"/>
</dbReference>
<dbReference type="CDD" id="cd01913">
    <property type="entry name" value="protease_HslV"/>
    <property type="match status" value="1"/>
</dbReference>
<dbReference type="Gene3D" id="3.60.20.10">
    <property type="entry name" value="Glutamine Phosphoribosylpyrophosphate, subunit 1, domain 1"/>
    <property type="match status" value="1"/>
</dbReference>
<dbReference type="HAMAP" id="MF_00248">
    <property type="entry name" value="HslV"/>
    <property type="match status" value="1"/>
</dbReference>
<dbReference type="InterPro" id="IPR022281">
    <property type="entry name" value="ATP-dep_Prtase_HsIV_su"/>
</dbReference>
<dbReference type="InterPro" id="IPR029055">
    <property type="entry name" value="Ntn_hydrolases_N"/>
</dbReference>
<dbReference type="InterPro" id="IPR001353">
    <property type="entry name" value="Proteasome_sua/b"/>
</dbReference>
<dbReference type="InterPro" id="IPR023333">
    <property type="entry name" value="Proteasome_suB-type"/>
</dbReference>
<dbReference type="NCBIfam" id="TIGR03692">
    <property type="entry name" value="ATP_dep_HslV"/>
    <property type="match status" value="1"/>
</dbReference>
<dbReference type="NCBIfam" id="NF003964">
    <property type="entry name" value="PRK05456.1"/>
    <property type="match status" value="1"/>
</dbReference>
<dbReference type="PANTHER" id="PTHR32194:SF0">
    <property type="entry name" value="ATP-DEPENDENT PROTEASE SUBUNIT HSLV"/>
    <property type="match status" value="1"/>
</dbReference>
<dbReference type="PANTHER" id="PTHR32194">
    <property type="entry name" value="METALLOPROTEASE TLDD"/>
    <property type="match status" value="1"/>
</dbReference>
<dbReference type="Pfam" id="PF00227">
    <property type="entry name" value="Proteasome"/>
    <property type="match status" value="1"/>
</dbReference>
<dbReference type="PIRSF" id="PIRSF039093">
    <property type="entry name" value="HslV"/>
    <property type="match status" value="1"/>
</dbReference>
<dbReference type="SUPFAM" id="SSF56235">
    <property type="entry name" value="N-terminal nucleophile aminohydrolases (Ntn hydrolases)"/>
    <property type="match status" value="1"/>
</dbReference>
<dbReference type="PROSITE" id="PS51476">
    <property type="entry name" value="PROTEASOME_BETA_2"/>
    <property type="match status" value="1"/>
</dbReference>
<sequence>MSNTTLHATTIYAVRHNGKAAMAGDGQVTLGQQVIMKQTARKVRRLYEGKVLAGFAGSVADAFTLFEKFETKLQQFSGNLERAAVELAQEWRGDKQLRQLEAMLIVMDKDAILVVSGTGEVIAPDDDLIAIGSGGNYALSAGRALKHHASHLSAEEMAYESLKVAADICVFTNDNIVVETL</sequence>
<evidence type="ECO:0000255" key="1">
    <source>
        <dbReference type="HAMAP-Rule" id="MF_00248"/>
    </source>
</evidence>
<reference key="1">
    <citation type="journal article" date="2007" name="PLoS ONE">
        <title>Molecular correlates of host specialization in Staphylococcus aureus.</title>
        <authorList>
            <person name="Herron-Olson L."/>
            <person name="Fitzgerald J.R."/>
            <person name="Musser J.M."/>
            <person name="Kapur V."/>
        </authorList>
    </citation>
    <scope>NUCLEOTIDE SEQUENCE [LARGE SCALE GENOMIC DNA]</scope>
    <source>
        <strain>bovine RF122 / ET3-1</strain>
    </source>
</reference>
<name>HSLV_STAAB</name>
<keyword id="KW-0021">Allosteric enzyme</keyword>
<keyword id="KW-0963">Cytoplasm</keyword>
<keyword id="KW-0378">Hydrolase</keyword>
<keyword id="KW-0479">Metal-binding</keyword>
<keyword id="KW-0645">Protease</keyword>
<keyword id="KW-0915">Sodium</keyword>
<keyword id="KW-0346">Stress response</keyword>
<keyword id="KW-0888">Threonine protease</keyword>
<feature type="chain" id="PRO_1000012682" description="ATP-dependent protease subunit HslV">
    <location>
        <begin position="1"/>
        <end position="181"/>
    </location>
</feature>
<feature type="active site" evidence="1">
    <location>
        <position position="9"/>
    </location>
</feature>
<feature type="binding site" evidence="1">
    <location>
        <position position="166"/>
    </location>
    <ligand>
        <name>Na(+)</name>
        <dbReference type="ChEBI" id="CHEBI:29101"/>
    </ligand>
</feature>
<feature type="binding site" evidence="1">
    <location>
        <position position="169"/>
    </location>
    <ligand>
        <name>Na(+)</name>
        <dbReference type="ChEBI" id="CHEBI:29101"/>
    </ligand>
</feature>
<feature type="binding site" evidence="1">
    <location>
        <position position="172"/>
    </location>
    <ligand>
        <name>Na(+)</name>
        <dbReference type="ChEBI" id="CHEBI:29101"/>
    </ligand>
</feature>
<comment type="function">
    <text evidence="1">Protease subunit of a proteasome-like degradation complex believed to be a general protein degrading machinery.</text>
</comment>
<comment type="catalytic activity">
    <reaction evidence="1">
        <text>ATP-dependent cleavage of peptide bonds with broad specificity.</text>
        <dbReference type="EC" id="3.4.25.2"/>
    </reaction>
</comment>
<comment type="activity regulation">
    <text evidence="1">Allosterically activated by HslU binding.</text>
</comment>
<comment type="subunit">
    <text evidence="1">A double ring-shaped homohexamer of HslV is capped on each side by a ring-shaped HslU homohexamer. The assembly of the HslU/HslV complex is dependent on binding of ATP.</text>
</comment>
<comment type="subcellular location">
    <subcellularLocation>
        <location evidence="1">Cytoplasm</location>
    </subcellularLocation>
</comment>
<comment type="similarity">
    <text evidence="1">Belongs to the peptidase T1B family. HslV subfamily.</text>
</comment>
<protein>
    <recommendedName>
        <fullName evidence="1">ATP-dependent protease subunit HslV</fullName>
        <ecNumber evidence="1">3.4.25.2</ecNumber>
    </recommendedName>
</protein>
<accession>Q2YXL5</accession>
<proteinExistence type="inferred from homology"/>
<organism>
    <name type="scientific">Staphylococcus aureus (strain bovine RF122 / ET3-1)</name>
    <dbReference type="NCBI Taxonomy" id="273036"/>
    <lineage>
        <taxon>Bacteria</taxon>
        <taxon>Bacillati</taxon>
        <taxon>Bacillota</taxon>
        <taxon>Bacilli</taxon>
        <taxon>Bacillales</taxon>
        <taxon>Staphylococcaceae</taxon>
        <taxon>Staphylococcus</taxon>
    </lineage>
</organism>
<gene>
    <name evidence="1" type="primary">hslV</name>
    <name type="ordered locus">SAB1115</name>
</gene>